<keyword id="KW-0007">Acetylation</keyword>
<keyword id="KW-0903">Direct protein sequencing</keyword>
<keyword id="KW-1035">Host cytoplasm</keyword>
<keyword id="KW-1048">Host nucleus</keyword>
<keyword id="KW-0945">Host-virus interaction</keyword>
<keyword id="KW-1185">Reference proteome</keyword>
<accession>P06485</accession>
<accession>B9VQJ6</accession>
<accession>Q09I75</accession>
<organismHost>
    <name type="scientific">Homo sapiens</name>
    <name type="common">Human</name>
    <dbReference type="NCBI Taxonomy" id="9606"/>
</organismHost>
<feature type="initiator methionine" description="Removed; by host" evidence="3">
    <location>
        <position position="1"/>
    </location>
</feature>
<feature type="chain" id="PRO_0000116126" description="Protein US2">
    <location>
        <begin position="2"/>
        <end position="291"/>
    </location>
</feature>
<feature type="region of interest" description="Disordered" evidence="2">
    <location>
        <begin position="251"/>
        <end position="270"/>
    </location>
</feature>
<feature type="modified residue" description="N-acetylglycine; by host; partial" evidence="3">
    <location>
        <position position="2"/>
    </location>
</feature>
<feature type="sequence variant" description="In strain: Nonneuroinvasive mutant HF10.">
    <original>R</original>
    <variation>C</variation>
    <location>
        <position position="80"/>
    </location>
</feature>
<feature type="sequence variant" description="In strain: Nonneuroinvasive mutant HF10.">
    <original>E</original>
    <variation>K</variation>
    <location>
        <position position="172"/>
    </location>
</feature>
<sequence length="291" mass="32471">MGVVVVNVMTLLDQNNALPRTSVDASPALWSFLLRQCRILASEPLGTPVVVRPANLRRLAEPLMDLPKPTRPIVRTRSCRCPPNTTTGLFAEDSPLESTEVVDAVACFRLLHRDQPSPPRLYHLWVVGAADLCVPFLEYAQKIRLGVRFIAIKTPDAWVGEPWAVPTRFLPEWTVAWTPFPAAPNHPLETLLSRYEYQYGVVLPGTNGRERDCMRWLRSLIALHKPHPATPGPLTTSHPVRRPCCACMGMPEVPDEQPTSPGRGPQETDPLIAVRGERPRLPHICYPVTTL</sequence>
<protein>
    <recommendedName>
        <fullName>Protein US2</fullName>
    </recommendedName>
</protein>
<gene>
    <name type="ORF">US2</name>
</gene>
<comment type="subunit">
    <text evidence="1">Interacts with host KRT18.</text>
</comment>
<comment type="subcellular location">
    <subcellularLocation>
        <location evidence="1">Host cytoplasm</location>
    </subcellularLocation>
    <subcellularLocation>
        <location evidence="1">Host nucleus</location>
    </subcellularLocation>
    <text evidence="1">Found in association with the nuclear matrix of infected cells.</text>
</comment>
<comment type="similarity">
    <text evidence="4">Belongs to the herpesviridae HHV-1 US2 protein family.</text>
</comment>
<dbReference type="EMBL" id="X02138">
    <property type="protein sequence ID" value="CAA26056.1"/>
    <property type="molecule type" value="Genomic_DNA"/>
</dbReference>
<dbReference type="EMBL" id="L00036">
    <property type="protein sequence ID" value="AAA96686.1"/>
    <property type="molecule type" value="Genomic_DNA"/>
</dbReference>
<dbReference type="EMBL" id="X14112">
    <property type="protein sequence ID" value="CAA32279.1"/>
    <property type="molecule type" value="Genomic_DNA"/>
</dbReference>
<dbReference type="EMBL" id="DQ889502">
    <property type="protein sequence ID" value="ABI63520.1"/>
    <property type="molecule type" value="Genomic_DNA"/>
</dbReference>
<dbReference type="EMBL" id="FJ593289">
    <property type="protein sequence ID" value="ACM62291.1"/>
    <property type="molecule type" value="Genomic_DNA"/>
</dbReference>
<dbReference type="PIR" id="A05238">
    <property type="entry name" value="QQBE72"/>
</dbReference>
<dbReference type="RefSeq" id="YP_009137137.1">
    <property type="nucleotide sequence ID" value="NC_001806.2"/>
</dbReference>
<dbReference type="BioGRID" id="971433">
    <property type="interactions" value="3"/>
</dbReference>
<dbReference type="DNASU" id="2703399"/>
<dbReference type="GeneID" id="2703399"/>
<dbReference type="KEGG" id="vg:2703399"/>
<dbReference type="Proteomes" id="UP000009294">
    <property type="component" value="Segment"/>
</dbReference>
<dbReference type="Proteomes" id="UP000180652">
    <property type="component" value="Segment"/>
</dbReference>
<dbReference type="GO" id="GO:0030430">
    <property type="term" value="C:host cell cytoplasm"/>
    <property type="evidence" value="ECO:0007669"/>
    <property type="project" value="UniProtKB-SubCell"/>
</dbReference>
<dbReference type="GO" id="GO:0042025">
    <property type="term" value="C:host cell nucleus"/>
    <property type="evidence" value="ECO:0007669"/>
    <property type="project" value="UniProtKB-SubCell"/>
</dbReference>
<dbReference type="InterPro" id="IPR003485">
    <property type="entry name" value="Herpes_US2_varicellovirus"/>
</dbReference>
<dbReference type="InterPro" id="IPR036179">
    <property type="entry name" value="Ig-like_dom_sf"/>
</dbReference>
<dbReference type="Pfam" id="PF02476">
    <property type="entry name" value="US2"/>
    <property type="match status" value="1"/>
</dbReference>
<dbReference type="SUPFAM" id="SSF48726">
    <property type="entry name" value="Immunoglobulin"/>
    <property type="match status" value="1"/>
</dbReference>
<organism>
    <name type="scientific">Human herpesvirus 1 (strain 17)</name>
    <name type="common">HHV-1</name>
    <name type="synonym">Human herpes simplex virus 1</name>
    <dbReference type="NCBI Taxonomy" id="10299"/>
    <lineage>
        <taxon>Viruses</taxon>
        <taxon>Duplodnaviria</taxon>
        <taxon>Heunggongvirae</taxon>
        <taxon>Peploviricota</taxon>
        <taxon>Herviviricetes</taxon>
        <taxon>Herpesvirales</taxon>
        <taxon>Orthoherpesviridae</taxon>
        <taxon>Alphaherpesvirinae</taxon>
        <taxon>Simplexvirus</taxon>
        <taxon>Simplexvirus humanalpha1</taxon>
        <taxon>Human herpesvirus 1</taxon>
    </lineage>
</organism>
<name>US02_HHV11</name>
<evidence type="ECO:0000250" key="1"/>
<evidence type="ECO:0000256" key="2">
    <source>
        <dbReference type="SAM" id="MobiDB-lite"/>
    </source>
</evidence>
<evidence type="ECO:0000269" key="3">
    <source ref="5"/>
</evidence>
<evidence type="ECO:0000305" key="4"/>
<proteinExistence type="evidence at protein level"/>
<reference key="1">
    <citation type="journal article" date="1985" name="J. Mol. Biol.">
        <title>Sequence determination and genetic content of the short unique region in the genome of herpes simplex virus type 1.</title>
        <authorList>
            <person name="McGeoch D.J."/>
            <person name="Dolan A."/>
            <person name="Donald S."/>
            <person name="Rixon F.J."/>
        </authorList>
    </citation>
    <scope>NUCLEOTIDE SEQUENCE [LARGE SCALE GENOMIC DNA]</scope>
</reference>
<reference key="2">
    <citation type="journal article" date="1988" name="J. Gen. Virol.">
        <title>The complete DNA sequence of the long unique region in the genome of herpes simplex virus type 1.</title>
        <authorList>
            <person name="McGeoch D.J."/>
            <person name="Dalrymple M.A."/>
            <person name="Davison A.J."/>
            <person name="Dolan A."/>
            <person name="Frame M.C."/>
            <person name="McNab D."/>
            <person name="Perry L.J."/>
            <person name="Scott J.E."/>
            <person name="Taylor P."/>
        </authorList>
    </citation>
    <scope>NUCLEOTIDE SEQUENCE [GENOMIC DNA]</scope>
</reference>
<reference key="3">
    <citation type="journal article" date="2007" name="Microbes Infect.">
        <title>Determination and analysis of the DNA sequence of highly attenuated herpes simplex virus type 1 mutant HF10, a potential oncolytic virus.</title>
        <authorList>
            <person name="Ushijima Y."/>
            <person name="Luo C."/>
            <person name="Goshima F."/>
            <person name="Yamauchi Y."/>
            <person name="Kimura H."/>
            <person name="Nishiyama Y."/>
        </authorList>
    </citation>
    <scope>NUCLEOTIDE SEQUENCE [LARGE SCALE GENOMIC DNA]</scope>
    <source>
        <strain>Nonneuroinvasive mutant HF10</strain>
    </source>
</reference>
<reference key="4">
    <citation type="submission" date="2008-12" db="EMBL/GenBank/DDBJ databases">
        <title>Herpes simplex virus type 1 bacterial artificial chromosome.</title>
        <authorList>
            <person name="Cunningham C."/>
            <person name="Davison A.J."/>
        </authorList>
    </citation>
    <scope>NUCLEOTIDE SEQUENCE [LARGE SCALE GENOMIC DNA]</scope>
    <source>
        <strain>17 syn+</strain>
    </source>
</reference>
<reference key="5">
    <citation type="submission" date="2005-11" db="UniProtKB">
        <authorList>
            <person name="Quadroni M."/>
            <person name="Greco A."/>
            <person name="Bienvenut W.V."/>
        </authorList>
    </citation>
    <scope>PROTEIN SEQUENCE OF 2-20; 21-35 AND 154-168</scope>
    <scope>CLEAVAGE OF INITIATOR METHIONINE</scope>
    <scope>ACETYLATION AT GLY-2</scope>
</reference>